<evidence type="ECO:0000255" key="1">
    <source>
        <dbReference type="HAMAP-Rule" id="MF_00436"/>
    </source>
</evidence>
<evidence type="ECO:0000255" key="2">
    <source>
        <dbReference type="PROSITE-ProRule" id="PRU01346"/>
    </source>
</evidence>
<evidence type="ECO:0000256" key="3">
    <source>
        <dbReference type="SAM" id="MobiDB-lite"/>
    </source>
</evidence>
<comment type="function">
    <text evidence="1">RNA chaperone that binds small regulatory RNA (sRNAs) and mRNAs to facilitate mRNA translational regulation in response to envelope stress, environmental stress and changes in metabolite concentrations. Also binds with high specificity to tRNAs.</text>
</comment>
<comment type="subunit">
    <text evidence="1">Homohexamer.</text>
</comment>
<comment type="similarity">
    <text evidence="1">Belongs to the Hfq family.</text>
</comment>
<accession>B3H331</accession>
<name>HFQ_ACTP7</name>
<organism>
    <name type="scientific">Actinobacillus pleuropneumoniae serotype 7 (strain AP76)</name>
    <dbReference type="NCBI Taxonomy" id="537457"/>
    <lineage>
        <taxon>Bacteria</taxon>
        <taxon>Pseudomonadati</taxon>
        <taxon>Pseudomonadota</taxon>
        <taxon>Gammaproteobacteria</taxon>
        <taxon>Pasteurellales</taxon>
        <taxon>Pasteurellaceae</taxon>
        <taxon>Actinobacillus</taxon>
    </lineage>
</organism>
<dbReference type="EMBL" id="CP001091">
    <property type="protein sequence ID" value="ACE62701.1"/>
    <property type="molecule type" value="Genomic_DNA"/>
</dbReference>
<dbReference type="RefSeq" id="WP_005599741.1">
    <property type="nucleotide sequence ID" value="NC_010939.1"/>
</dbReference>
<dbReference type="SMR" id="B3H331"/>
<dbReference type="GeneID" id="48600262"/>
<dbReference type="KEGG" id="apa:APP7_2049"/>
<dbReference type="HOGENOM" id="CLU_113688_2_0_6"/>
<dbReference type="Proteomes" id="UP000001226">
    <property type="component" value="Chromosome"/>
</dbReference>
<dbReference type="GO" id="GO:0005829">
    <property type="term" value="C:cytosol"/>
    <property type="evidence" value="ECO:0007669"/>
    <property type="project" value="TreeGrafter"/>
</dbReference>
<dbReference type="GO" id="GO:0003723">
    <property type="term" value="F:RNA binding"/>
    <property type="evidence" value="ECO:0007669"/>
    <property type="project" value="UniProtKB-UniRule"/>
</dbReference>
<dbReference type="GO" id="GO:0006355">
    <property type="term" value="P:regulation of DNA-templated transcription"/>
    <property type="evidence" value="ECO:0007669"/>
    <property type="project" value="InterPro"/>
</dbReference>
<dbReference type="GO" id="GO:0043487">
    <property type="term" value="P:regulation of RNA stability"/>
    <property type="evidence" value="ECO:0007669"/>
    <property type="project" value="TreeGrafter"/>
</dbReference>
<dbReference type="GO" id="GO:0045974">
    <property type="term" value="P:regulation of translation, ncRNA-mediated"/>
    <property type="evidence" value="ECO:0007669"/>
    <property type="project" value="TreeGrafter"/>
</dbReference>
<dbReference type="CDD" id="cd01716">
    <property type="entry name" value="Hfq"/>
    <property type="match status" value="1"/>
</dbReference>
<dbReference type="FunFam" id="2.30.30.100:FF:000001">
    <property type="entry name" value="RNA-binding protein Hfq"/>
    <property type="match status" value="1"/>
</dbReference>
<dbReference type="Gene3D" id="2.30.30.100">
    <property type="match status" value="1"/>
</dbReference>
<dbReference type="HAMAP" id="MF_00436">
    <property type="entry name" value="Hfq"/>
    <property type="match status" value="1"/>
</dbReference>
<dbReference type="InterPro" id="IPR005001">
    <property type="entry name" value="Hfq"/>
</dbReference>
<dbReference type="InterPro" id="IPR010920">
    <property type="entry name" value="LSM_dom_sf"/>
</dbReference>
<dbReference type="InterPro" id="IPR047575">
    <property type="entry name" value="Sm"/>
</dbReference>
<dbReference type="NCBIfam" id="TIGR02383">
    <property type="entry name" value="Hfq"/>
    <property type="match status" value="1"/>
</dbReference>
<dbReference type="NCBIfam" id="NF001602">
    <property type="entry name" value="PRK00395.1"/>
    <property type="match status" value="1"/>
</dbReference>
<dbReference type="PANTHER" id="PTHR34772">
    <property type="entry name" value="RNA-BINDING PROTEIN HFQ"/>
    <property type="match status" value="1"/>
</dbReference>
<dbReference type="PANTHER" id="PTHR34772:SF1">
    <property type="entry name" value="RNA-BINDING PROTEIN HFQ"/>
    <property type="match status" value="1"/>
</dbReference>
<dbReference type="Pfam" id="PF17209">
    <property type="entry name" value="Hfq"/>
    <property type="match status" value="1"/>
</dbReference>
<dbReference type="SUPFAM" id="SSF50182">
    <property type="entry name" value="Sm-like ribonucleoproteins"/>
    <property type="match status" value="1"/>
</dbReference>
<dbReference type="PROSITE" id="PS52002">
    <property type="entry name" value="SM"/>
    <property type="match status" value="1"/>
</dbReference>
<proteinExistence type="inferred from homology"/>
<reference key="1">
    <citation type="submission" date="2008-06" db="EMBL/GenBank/DDBJ databases">
        <title>Genome and proteome analysis of A. pleuropneumoniae serotype 7.</title>
        <authorList>
            <person name="Linke B."/>
            <person name="Buettner F."/>
            <person name="Martinez-Arias R."/>
            <person name="Goesmann A."/>
            <person name="Baltes N."/>
            <person name="Tegetmeyer H."/>
            <person name="Singh M."/>
            <person name="Gerlach G.F."/>
        </authorList>
    </citation>
    <scope>NUCLEOTIDE SEQUENCE [LARGE SCALE GENOMIC DNA]</scope>
    <source>
        <strain>AP76</strain>
    </source>
</reference>
<gene>
    <name evidence="1" type="primary">hfq</name>
    <name type="ordered locus">APP7_2049</name>
</gene>
<feature type="chain" id="PRO_1000190298" description="RNA-binding protein Hfq">
    <location>
        <begin position="1"/>
        <end position="92"/>
    </location>
</feature>
<feature type="domain" description="Sm" evidence="2">
    <location>
        <begin position="9"/>
        <end position="68"/>
    </location>
</feature>
<feature type="region of interest" description="Disordered" evidence="3">
    <location>
        <begin position="69"/>
        <end position="92"/>
    </location>
</feature>
<feature type="compositionally biased region" description="Polar residues" evidence="3">
    <location>
        <begin position="69"/>
        <end position="81"/>
    </location>
</feature>
<sequence length="92" mass="10075">MAKGQSLQDPYLNALRRERIPVSIYLVNGIKLQGQIESFDQFVILLKNTVSQMVYKHAISTVVPARSVSHNNGGTSHTQQAPAVEAVADKAE</sequence>
<keyword id="KW-0694">RNA-binding</keyword>
<keyword id="KW-0346">Stress response</keyword>
<protein>
    <recommendedName>
        <fullName evidence="1">RNA-binding protein Hfq</fullName>
    </recommendedName>
</protein>